<keyword id="KW-0597">Phosphoprotein</keyword>
<keyword id="KW-1185">Reference proteome</keyword>
<organism>
    <name type="scientific">Saccharomyces cerevisiae (strain ATCC 204508 / S288c)</name>
    <name type="common">Baker's yeast</name>
    <dbReference type="NCBI Taxonomy" id="559292"/>
    <lineage>
        <taxon>Eukaryota</taxon>
        <taxon>Fungi</taxon>
        <taxon>Dikarya</taxon>
        <taxon>Ascomycota</taxon>
        <taxon>Saccharomycotina</taxon>
        <taxon>Saccharomycetes</taxon>
        <taxon>Saccharomycetales</taxon>
        <taxon>Saccharomycetaceae</taxon>
        <taxon>Saccharomyces</taxon>
    </lineage>
</organism>
<proteinExistence type="evidence at protein level"/>
<protein>
    <recommendedName>
        <fullName>Increasing suppression factor 1</fullName>
    </recommendedName>
    <alternativeName>
        <fullName>Mitochondrial biogenesis regulation protein 3</fullName>
    </alternativeName>
</protein>
<dbReference type="EMBL" id="X72671">
    <property type="protein sequence ID" value="CAA51221.1"/>
    <property type="molecule type" value="Genomic_DNA"/>
</dbReference>
<dbReference type="EMBL" id="X72931">
    <property type="protein sequence ID" value="CAA51435.1"/>
    <property type="molecule type" value="Genomic_DNA"/>
</dbReference>
<dbReference type="EMBL" id="Z49259">
    <property type="protein sequence ID" value="CAA89227.1"/>
    <property type="molecule type" value="Genomic_DNA"/>
</dbReference>
<dbReference type="EMBL" id="AY692919">
    <property type="protein sequence ID" value="AAT92938.1"/>
    <property type="molecule type" value="Genomic_DNA"/>
</dbReference>
<dbReference type="EMBL" id="BK006946">
    <property type="protein sequence ID" value="DAA09979.1"/>
    <property type="molecule type" value="Genomic_DNA"/>
</dbReference>
<dbReference type="PIR" id="S45578">
    <property type="entry name" value="S45578"/>
</dbReference>
<dbReference type="RefSeq" id="NP_013798.1">
    <property type="nucleotide sequence ID" value="NM_001182580.1"/>
</dbReference>
<dbReference type="BioGRID" id="35257">
    <property type="interactions" value="38"/>
</dbReference>
<dbReference type="FunCoup" id="P32488">
    <property type="interactions" value="65"/>
</dbReference>
<dbReference type="STRING" id="4932.YMR081C"/>
<dbReference type="GlyGen" id="P32488">
    <property type="glycosylation" value="1 site, 1 O-linked glycan (1 site)"/>
</dbReference>
<dbReference type="iPTMnet" id="P32488"/>
<dbReference type="PaxDb" id="4932-YMR081C"/>
<dbReference type="PeptideAtlas" id="P32488"/>
<dbReference type="EnsemblFungi" id="YMR081C_mRNA">
    <property type="protein sequence ID" value="YMR081C"/>
    <property type="gene ID" value="YMR081C"/>
</dbReference>
<dbReference type="GeneID" id="855105"/>
<dbReference type="KEGG" id="sce:YMR081C"/>
<dbReference type="AGR" id="SGD:S000004686"/>
<dbReference type="SGD" id="S000004686">
    <property type="gene designation" value="ISF1"/>
</dbReference>
<dbReference type="VEuPathDB" id="FungiDB:YMR081C"/>
<dbReference type="eggNOG" id="ENOG502ST5N">
    <property type="taxonomic scope" value="Eukaryota"/>
</dbReference>
<dbReference type="HOGENOM" id="CLU_070894_0_0_1"/>
<dbReference type="InParanoid" id="P32488"/>
<dbReference type="OMA" id="CFAIPTH"/>
<dbReference type="OrthoDB" id="4033526at2759"/>
<dbReference type="BioCyc" id="YEAST:G3O-32783-MONOMER"/>
<dbReference type="BioGRID-ORCS" id="855105">
    <property type="hits" value="1 hit in 10 CRISPR screens"/>
</dbReference>
<dbReference type="PRO" id="PR:P32488"/>
<dbReference type="Proteomes" id="UP000002311">
    <property type="component" value="Chromosome XIII"/>
</dbReference>
<dbReference type="RNAct" id="P32488">
    <property type="molecule type" value="protein"/>
</dbReference>
<dbReference type="GO" id="GO:0009060">
    <property type="term" value="P:aerobic respiration"/>
    <property type="evidence" value="ECO:0000316"/>
    <property type="project" value="SGD"/>
</dbReference>
<dbReference type="InterPro" id="IPR031443">
    <property type="entry name" value="Mbr1"/>
</dbReference>
<dbReference type="Pfam" id="PF17058">
    <property type="entry name" value="MBR1"/>
    <property type="match status" value="2"/>
</dbReference>
<evidence type="ECO:0000256" key="1">
    <source>
        <dbReference type="SAM" id="MobiDB-lite"/>
    </source>
</evidence>
<evidence type="ECO:0000269" key="2">
    <source>
    </source>
</evidence>
<evidence type="ECO:0000269" key="3">
    <source>
    </source>
</evidence>
<evidence type="ECO:0000269" key="4">
    <source>
    </source>
</evidence>
<evidence type="ECO:0000305" key="5"/>
<evidence type="ECO:0007744" key="6">
    <source>
    </source>
</evidence>
<sequence>MIASEIFERGVQDPFCQDCDYEDETDVQSFLGSNDLNDFVNSKLASFSFQNSSKSNNSHHSSSTNAGNTSRHIGNHTIGHHLRKIKTAPHHLYGFVPANSTNNSNEPIRPSPRRIRANSSTLIHQLSRQSTRQSSLGDAADSCFDHKCIKPRSRHSSCYGIPTHLYGLEKYVSSELDSLAVANDQSNDLTSPLTSVSTPASNSNSYLNLNSSSAAYPSSYLSNEKNNRLKLISHGKISSNNVPGHSGNLNHYHRERTPSNLRRESFSLLSNGSSSSPLQTRNNSYSNSLVKSPSNSSLNTSVASSNEESSPHTSNCLEERNPRRKSFIKLSLASSFSN</sequence>
<accession>P32488</accession>
<accession>D6VZQ5</accession>
<gene>
    <name type="primary">ISF1</name>
    <name type="synonym">MBR3</name>
    <name type="ordered locus">YMR081C</name>
    <name type="ORF">YM9582.06C</name>
</gene>
<feature type="chain" id="PRO_0000096272" description="Increasing suppression factor 1">
    <location>
        <begin position="1"/>
        <end position="338"/>
    </location>
</feature>
<feature type="region of interest" description="Disordered" evidence="1">
    <location>
        <begin position="50"/>
        <end position="75"/>
    </location>
</feature>
<feature type="region of interest" description="Disordered" evidence="1">
    <location>
        <begin position="267"/>
        <end position="322"/>
    </location>
</feature>
<feature type="compositionally biased region" description="Low complexity" evidence="1">
    <location>
        <begin position="50"/>
        <end position="70"/>
    </location>
</feature>
<feature type="compositionally biased region" description="Low complexity" evidence="1">
    <location>
        <begin position="267"/>
        <end position="306"/>
    </location>
</feature>
<feature type="compositionally biased region" description="Polar residues" evidence="1">
    <location>
        <begin position="307"/>
        <end position="316"/>
    </location>
</feature>
<feature type="modified residue" description="Phosphoserine" evidence="6">
    <location>
        <position position="119"/>
    </location>
</feature>
<name>ISF1_YEAST</name>
<comment type="function">
    <text evidence="2 3">Could influence the NAM7/UPF1 function, possibly at the level of mRNA turnover. Participates in mitochondrial biogenesis.</text>
</comment>
<comment type="induction">
    <text evidence="4">Repressed by glucose. Cotranscribed with NAM7 in the absence of CYP1.</text>
</comment>
<comment type="similarity">
    <text evidence="5">Belongs to the ISF1/MBR1 family.</text>
</comment>
<reference key="1">
    <citation type="journal article" date="1994" name="Mol. Gen. Genet.">
        <title>MBR1 and MBR3, two related yeast genes that can suppress the growth defect of hap2, hap3 and hap4 mutants.</title>
        <authorList>
            <person name="Daignan-Fornier B."/>
            <person name="Nguyen C.C."/>
            <person name="Reisdorf P."/>
            <person name="Lemeignan B."/>
            <person name="Bolotin-Fukuhara M."/>
        </authorList>
    </citation>
    <scope>NUCLEOTIDE SEQUENCE [GENOMIC DNA]</scope>
    <scope>FUNCTION</scope>
    <source>
        <strain>R100</strain>
    </source>
</reference>
<reference key="2">
    <citation type="journal article" date="1994" name="Mol. Gen. Genet.">
        <title>Two adjacent nuclear genes, ISF1 and NAM7/UPF1, cooperatively participate in mitochondrial functions in Saccharomyces cerevisiae.</title>
        <authorList>
            <person name="Altamura N."/>
            <person name="Dujardin G."/>
            <person name="Groudinsky O."/>
            <person name="Slonimski P.P."/>
        </authorList>
    </citation>
    <scope>NUCLEOTIDE SEQUENCE [GENOMIC DNA]</scope>
    <scope>FUNCTION</scope>
</reference>
<reference key="3">
    <citation type="journal article" date="1997" name="Nature">
        <title>The nucleotide sequence of Saccharomyces cerevisiae chromosome XIII.</title>
        <authorList>
            <person name="Bowman S."/>
            <person name="Churcher C.M."/>
            <person name="Badcock K."/>
            <person name="Brown D."/>
            <person name="Chillingworth T."/>
            <person name="Connor R."/>
            <person name="Dedman K."/>
            <person name="Devlin K."/>
            <person name="Gentles S."/>
            <person name="Hamlin N."/>
            <person name="Hunt S."/>
            <person name="Jagels K."/>
            <person name="Lye G."/>
            <person name="Moule S."/>
            <person name="Odell C."/>
            <person name="Pearson D."/>
            <person name="Rajandream M.A."/>
            <person name="Rice P."/>
            <person name="Skelton J."/>
            <person name="Walsh S.V."/>
            <person name="Whitehead S."/>
            <person name="Barrell B.G."/>
        </authorList>
    </citation>
    <scope>NUCLEOTIDE SEQUENCE [LARGE SCALE GENOMIC DNA]</scope>
    <source>
        <strain>ATCC 204508 / S288c</strain>
    </source>
</reference>
<reference key="4">
    <citation type="journal article" date="2014" name="G3 (Bethesda)">
        <title>The reference genome sequence of Saccharomyces cerevisiae: Then and now.</title>
        <authorList>
            <person name="Engel S.R."/>
            <person name="Dietrich F.S."/>
            <person name="Fisk D.G."/>
            <person name="Binkley G."/>
            <person name="Balakrishnan R."/>
            <person name="Costanzo M.C."/>
            <person name="Dwight S.S."/>
            <person name="Hitz B.C."/>
            <person name="Karra K."/>
            <person name="Nash R.S."/>
            <person name="Weng S."/>
            <person name="Wong E.D."/>
            <person name="Lloyd P."/>
            <person name="Skrzypek M.S."/>
            <person name="Miyasato S.R."/>
            <person name="Simison M."/>
            <person name="Cherry J.M."/>
        </authorList>
    </citation>
    <scope>GENOME REANNOTATION</scope>
    <source>
        <strain>ATCC 204508 / S288c</strain>
    </source>
</reference>
<reference key="5">
    <citation type="journal article" date="1997" name="FEBS Lett.">
        <title>The transcription of NAM7/UPF1 is enhanced in the absence of Cyp1p/Hap1p concomitant with the appearance of an ISF1-NAM7 cotranscript in Saccharomyces cerevisiae.</title>
        <authorList>
            <person name="Altamura N."/>
            <person name="de Pinto B."/>
            <person name="Castaldo R."/>
            <person name="Verdiere J."/>
        </authorList>
    </citation>
    <scope>INDUCTION</scope>
</reference>
<reference key="6">
    <citation type="journal article" date="2007" name="Genome Res.">
        <title>Approaching a complete repository of sequence-verified protein-encoding clones for Saccharomyces cerevisiae.</title>
        <authorList>
            <person name="Hu Y."/>
            <person name="Rolfs A."/>
            <person name="Bhullar B."/>
            <person name="Murthy T.V.S."/>
            <person name="Zhu C."/>
            <person name="Berger M.F."/>
            <person name="Camargo A.A."/>
            <person name="Kelley F."/>
            <person name="McCarron S."/>
            <person name="Jepson D."/>
            <person name="Richardson A."/>
            <person name="Raphael J."/>
            <person name="Moreira D."/>
            <person name="Taycher E."/>
            <person name="Zuo D."/>
            <person name="Mohr S."/>
            <person name="Kane M.F."/>
            <person name="Williamson J."/>
            <person name="Simpson A.J.G."/>
            <person name="Bulyk M.L."/>
            <person name="Harlow E."/>
            <person name="Marsischky G."/>
            <person name="Kolodner R.D."/>
            <person name="LaBaer J."/>
        </authorList>
    </citation>
    <scope>NUCLEOTIDE SEQUENCE [GENOMIC DNA]</scope>
    <source>
        <strain>ATCC 204508 / S288c</strain>
    </source>
</reference>
<reference key="7">
    <citation type="journal article" date="2008" name="Mol. Cell. Proteomics">
        <title>A multidimensional chromatography technology for in-depth phosphoproteome analysis.</title>
        <authorList>
            <person name="Albuquerque C.P."/>
            <person name="Smolka M.B."/>
            <person name="Payne S.H."/>
            <person name="Bafna V."/>
            <person name="Eng J."/>
            <person name="Zhou H."/>
        </authorList>
    </citation>
    <scope>IDENTIFICATION BY MASS SPECTROMETRY [LARGE SCALE ANALYSIS]</scope>
</reference>
<reference key="8">
    <citation type="journal article" date="2009" name="Science">
        <title>Global analysis of Cdk1 substrate phosphorylation sites provides insights into evolution.</title>
        <authorList>
            <person name="Holt L.J."/>
            <person name="Tuch B.B."/>
            <person name="Villen J."/>
            <person name="Johnson A.D."/>
            <person name="Gygi S.P."/>
            <person name="Morgan D.O."/>
        </authorList>
    </citation>
    <scope>PHOSPHORYLATION [LARGE SCALE ANALYSIS] AT SER-119</scope>
    <scope>IDENTIFICATION BY MASS SPECTROMETRY [LARGE SCALE ANALYSIS]</scope>
</reference>
<reference key="9">
    <citation type="journal article" date="2012" name="Proc. Natl. Acad. Sci. U.S.A.">
        <title>N-terminal acetylome analyses and functional insights of the N-terminal acetyltransferase NatB.</title>
        <authorList>
            <person name="Van Damme P."/>
            <person name="Lasa M."/>
            <person name="Polevoda B."/>
            <person name="Gazquez C."/>
            <person name="Elosegui-Artola A."/>
            <person name="Kim D.S."/>
            <person name="De Juan-Pardo E."/>
            <person name="Demeyer K."/>
            <person name="Hole K."/>
            <person name="Larrea E."/>
            <person name="Timmerman E."/>
            <person name="Prieto J."/>
            <person name="Arnesen T."/>
            <person name="Sherman F."/>
            <person name="Gevaert K."/>
            <person name="Aldabe R."/>
        </authorList>
    </citation>
    <scope>IDENTIFICATION BY MASS SPECTROMETRY [LARGE SCALE ANALYSIS]</scope>
</reference>